<protein>
    <recommendedName>
        <fullName>Placenta-expressed transcript 1 protein</fullName>
    </recommendedName>
</protein>
<evidence type="ECO:0000250" key="1"/>
<evidence type="ECO:0000255" key="2"/>
<comment type="function">
    <text evidence="1">Modulates leading keratinocyte migration and cellular adhesion to matrix proteins during a wound-healing response and promotes wound repair. May play a role during trichilemmal differentiation of the hair follicle (By similarity).</text>
</comment>
<comment type="subcellular location">
    <subcellularLocation>
        <location evidence="1">Apical cell membrane</location>
        <topology evidence="1">Lipid-anchor</topology>
        <topology evidence="1">GPI-anchor</topology>
    </subcellularLocation>
    <text evidence="1">Localized at the apical membrane of the most differentiated keratinocytes of the outer root sheath (ORS), clustered mainly in planar regions of the plasma membrane at the base of microvilli.</text>
</comment>
<comment type="PTM">
    <text evidence="1">N-glycosylated.</text>
</comment>
<comment type="PTM">
    <text evidence="1">GPI-anchored.</text>
</comment>
<organism>
    <name type="scientific">Rattus norvegicus</name>
    <name type="common">Rat</name>
    <dbReference type="NCBI Taxonomy" id="10116"/>
    <lineage>
        <taxon>Eukaryota</taxon>
        <taxon>Metazoa</taxon>
        <taxon>Chordata</taxon>
        <taxon>Craniata</taxon>
        <taxon>Vertebrata</taxon>
        <taxon>Euteleostomi</taxon>
        <taxon>Mammalia</taxon>
        <taxon>Eutheria</taxon>
        <taxon>Euarchontoglires</taxon>
        <taxon>Glires</taxon>
        <taxon>Rodentia</taxon>
        <taxon>Myomorpha</taxon>
        <taxon>Muroidea</taxon>
        <taxon>Muridae</taxon>
        <taxon>Murinae</taxon>
        <taxon>Rattus</taxon>
    </lineage>
</organism>
<reference key="1">
    <citation type="journal article" date="2004" name="Genome Res.">
        <title>The status, quality, and expansion of the NIH full-length cDNA project: the Mammalian Gene Collection (MGC).</title>
        <authorList>
            <consortium name="The MGC Project Team"/>
        </authorList>
    </citation>
    <scope>NUCLEOTIDE SEQUENCE [LARGE SCALE MRNA]</scope>
    <source>
        <tissue>Ovary</tissue>
    </source>
</reference>
<sequence>MPALRTLLPHLGLFLCLALCFSPSFSLSNNESCILYDQVYPSDNLINASAEEVSGENTTYTVTVPVNDSVSAVILKAEKDNKPVGTWSGAYEKCNNSVVYNLTSLNNSAFQTNWTVPSSEDVTKVNLTIFIVINRTATVSSVKLEPKETSSLASTPESQTSAMTTAMTSAMTTAKTTAVATNSSTDVTSDNSTAVTTANSTAVTTANSTAVTTAKTTTMTTATTTAKSLAIRTLCSPLAGALHILLVFLISKLLF</sequence>
<gene>
    <name type="primary">Plet1</name>
</gene>
<accession>Q5HZW7</accession>
<keyword id="KW-1003">Cell membrane</keyword>
<keyword id="KW-0221">Differentiation</keyword>
<keyword id="KW-0325">Glycoprotein</keyword>
<keyword id="KW-0336">GPI-anchor</keyword>
<keyword id="KW-0449">Lipoprotein</keyword>
<keyword id="KW-0472">Membrane</keyword>
<keyword id="KW-1185">Reference proteome</keyword>
<keyword id="KW-0732">Signal</keyword>
<dbReference type="EMBL" id="BC088858">
    <property type="protein sequence ID" value="AAH88858.1"/>
    <property type="molecule type" value="mRNA"/>
</dbReference>
<dbReference type="RefSeq" id="NP_001014231.1">
    <property type="nucleotide sequence ID" value="NM_001014209.2"/>
</dbReference>
<dbReference type="STRING" id="10116.ENSRNOP00000055980"/>
<dbReference type="GlyCosmos" id="Q5HZW7">
    <property type="glycosylation" value="3 sites, No reported glycans"/>
</dbReference>
<dbReference type="GlyGen" id="Q5HZW7">
    <property type="glycosylation" value="3 sites"/>
</dbReference>
<dbReference type="PhosphoSitePlus" id="Q5HZW7"/>
<dbReference type="PaxDb" id="10116-ENSRNOP00000055980"/>
<dbReference type="GeneID" id="363060"/>
<dbReference type="KEGG" id="rno:363060"/>
<dbReference type="UCSC" id="RGD:1359217">
    <property type="organism name" value="rat"/>
</dbReference>
<dbReference type="AGR" id="RGD:1359217"/>
<dbReference type="CTD" id="349633"/>
<dbReference type="RGD" id="1359217">
    <property type="gene designation" value="Plet1"/>
</dbReference>
<dbReference type="VEuPathDB" id="HostDB:ENSRNOG00000024346"/>
<dbReference type="eggNOG" id="ENOG502RTZP">
    <property type="taxonomic scope" value="Eukaryota"/>
</dbReference>
<dbReference type="HOGENOM" id="CLU_099483_0_0_1"/>
<dbReference type="InParanoid" id="Q5HZW7"/>
<dbReference type="OrthoDB" id="92132at9989"/>
<dbReference type="PhylomeDB" id="Q5HZW7"/>
<dbReference type="TreeFam" id="TF344172"/>
<dbReference type="Reactome" id="R-RNO-163125">
    <property type="pathway name" value="Post-translational modification: synthesis of GPI-anchored proteins"/>
</dbReference>
<dbReference type="PRO" id="PR:Q5HZW7"/>
<dbReference type="Proteomes" id="UP000002494">
    <property type="component" value="Chromosome 8"/>
</dbReference>
<dbReference type="Bgee" id="ENSRNOG00000024346">
    <property type="expression patterns" value="Expressed in ovary and 13 other cell types or tissues"/>
</dbReference>
<dbReference type="GO" id="GO:0016324">
    <property type="term" value="C:apical plasma membrane"/>
    <property type="evidence" value="ECO:0000250"/>
    <property type="project" value="UniProtKB"/>
</dbReference>
<dbReference type="GO" id="GO:0009897">
    <property type="term" value="C:external side of plasma membrane"/>
    <property type="evidence" value="ECO:0000266"/>
    <property type="project" value="RGD"/>
</dbReference>
<dbReference type="GO" id="GO:0030154">
    <property type="term" value="P:cell differentiation"/>
    <property type="evidence" value="ECO:0007669"/>
    <property type="project" value="UniProtKB-KW"/>
</dbReference>
<dbReference type="GO" id="GO:0001953">
    <property type="term" value="P:negative regulation of cell-matrix adhesion"/>
    <property type="evidence" value="ECO:0000250"/>
    <property type="project" value="UniProtKB"/>
</dbReference>
<dbReference type="GO" id="GO:0030335">
    <property type="term" value="P:positive regulation of cell migration"/>
    <property type="evidence" value="ECO:0000250"/>
    <property type="project" value="UniProtKB"/>
</dbReference>
<dbReference type="GO" id="GO:0035313">
    <property type="term" value="P:wound healing, spreading of epidermal cells"/>
    <property type="evidence" value="ECO:0000250"/>
    <property type="project" value="UniProtKB"/>
</dbReference>
<dbReference type="InterPro" id="IPR026184">
    <property type="entry name" value="PLET1"/>
</dbReference>
<dbReference type="PANTHER" id="PTHR22527">
    <property type="entry name" value="PLACENTA-EXPRESSED TRANSCRIPT 1 PROTEIN"/>
    <property type="match status" value="1"/>
</dbReference>
<dbReference type="PANTHER" id="PTHR22527:SF2">
    <property type="entry name" value="PLACENTA-EXPRESSED TRANSCRIPT 1 PROTEIN"/>
    <property type="match status" value="1"/>
</dbReference>
<proteinExistence type="evidence at transcript level"/>
<feature type="signal peptide" evidence="2">
    <location>
        <begin position="1"/>
        <end position="26"/>
    </location>
</feature>
<feature type="chain" id="PRO_0000320956" description="Placenta-expressed transcript 1 protein">
    <location>
        <begin position="27"/>
        <end position="236"/>
    </location>
</feature>
<feature type="propeptide" id="PRO_0000424670" description="Removed in mature form" evidence="2">
    <location>
        <begin position="237"/>
        <end position="255"/>
    </location>
</feature>
<feature type="lipid moiety-binding region" description="GPI-anchor amidated serine" evidence="2">
    <location>
        <position position="236"/>
    </location>
</feature>
<feature type="glycosylation site" description="N-linked (GlcNAc...) asparagine" evidence="2">
    <location>
        <position position="57"/>
    </location>
</feature>
<feature type="glycosylation site" description="N-linked (GlcNAc...) asparagine" evidence="2">
    <location>
        <position position="67"/>
    </location>
</feature>
<feature type="glycosylation site" description="N-linked (GlcNAc...) asparagine" evidence="2">
    <location>
        <position position="126"/>
    </location>
</feature>
<name>PLET1_RAT</name>